<proteinExistence type="inferred from homology"/>
<feature type="chain" id="PRO_0000179403" description="Trigger factor">
    <location>
        <begin position="1"/>
        <end position="433"/>
    </location>
</feature>
<feature type="domain" description="PPIase FKBP-type" evidence="1">
    <location>
        <begin position="161"/>
        <end position="246"/>
    </location>
</feature>
<evidence type="ECO:0000255" key="1">
    <source>
        <dbReference type="HAMAP-Rule" id="MF_00303"/>
    </source>
</evidence>
<evidence type="ECO:0000305" key="2"/>
<comment type="function">
    <text evidence="1">Involved in protein export. Acts as a chaperone by maintaining the newly synthesized protein in an open conformation. Functions as a peptidyl-prolyl cis-trans isomerase.</text>
</comment>
<comment type="catalytic activity">
    <reaction evidence="1">
        <text>[protein]-peptidylproline (omega=180) = [protein]-peptidylproline (omega=0)</text>
        <dbReference type="Rhea" id="RHEA:16237"/>
        <dbReference type="Rhea" id="RHEA-COMP:10747"/>
        <dbReference type="Rhea" id="RHEA-COMP:10748"/>
        <dbReference type="ChEBI" id="CHEBI:83833"/>
        <dbReference type="ChEBI" id="CHEBI:83834"/>
        <dbReference type="EC" id="5.2.1.8"/>
    </reaction>
</comment>
<comment type="subcellular location">
    <subcellularLocation>
        <location>Cytoplasm</location>
    </subcellularLocation>
    <text evidence="1">About half TF is bound to the ribosome near the polypeptide exit tunnel while the other half is free in the cytoplasm.</text>
</comment>
<comment type="domain">
    <text evidence="1">Consists of 3 domains; the N-terminus binds the ribosome, the middle domain has PPIase activity, while the C-terminus has intrinsic chaperone activity on its own.</text>
</comment>
<comment type="similarity">
    <text evidence="1">Belongs to the FKBP-type PPIase family. Tig subfamily.</text>
</comment>
<comment type="sequence caution" evidence="2">
    <conflict type="erroneous initiation">
        <sequence resource="EMBL-CDS" id="CAG21017"/>
    </conflict>
</comment>
<dbReference type="EC" id="5.2.1.8" evidence="1"/>
<dbReference type="EMBL" id="CR378671">
    <property type="protein sequence ID" value="CAG21017.1"/>
    <property type="status" value="ALT_INIT"/>
    <property type="molecule type" value="Genomic_DNA"/>
</dbReference>
<dbReference type="RefSeq" id="WP_041394439.1">
    <property type="nucleotide sequence ID" value="NC_006370.1"/>
</dbReference>
<dbReference type="SMR" id="Q6LNV9"/>
<dbReference type="STRING" id="298386.PBPRA2638"/>
<dbReference type="KEGG" id="ppr:PBPRA2638"/>
<dbReference type="eggNOG" id="COG0544">
    <property type="taxonomic scope" value="Bacteria"/>
</dbReference>
<dbReference type="HOGENOM" id="CLU_033058_2_0_6"/>
<dbReference type="Proteomes" id="UP000000593">
    <property type="component" value="Chromosome 1"/>
</dbReference>
<dbReference type="GO" id="GO:0005737">
    <property type="term" value="C:cytoplasm"/>
    <property type="evidence" value="ECO:0007669"/>
    <property type="project" value="UniProtKB-SubCell"/>
</dbReference>
<dbReference type="GO" id="GO:0003755">
    <property type="term" value="F:peptidyl-prolyl cis-trans isomerase activity"/>
    <property type="evidence" value="ECO:0007669"/>
    <property type="project" value="UniProtKB-UniRule"/>
</dbReference>
<dbReference type="GO" id="GO:0044183">
    <property type="term" value="F:protein folding chaperone"/>
    <property type="evidence" value="ECO:0007669"/>
    <property type="project" value="TreeGrafter"/>
</dbReference>
<dbReference type="GO" id="GO:0043022">
    <property type="term" value="F:ribosome binding"/>
    <property type="evidence" value="ECO:0007669"/>
    <property type="project" value="TreeGrafter"/>
</dbReference>
<dbReference type="GO" id="GO:0051083">
    <property type="term" value="P:'de novo' cotranslational protein folding"/>
    <property type="evidence" value="ECO:0007669"/>
    <property type="project" value="TreeGrafter"/>
</dbReference>
<dbReference type="GO" id="GO:0051301">
    <property type="term" value="P:cell division"/>
    <property type="evidence" value="ECO:0007669"/>
    <property type="project" value="UniProtKB-KW"/>
</dbReference>
<dbReference type="GO" id="GO:0061077">
    <property type="term" value="P:chaperone-mediated protein folding"/>
    <property type="evidence" value="ECO:0007669"/>
    <property type="project" value="TreeGrafter"/>
</dbReference>
<dbReference type="GO" id="GO:0015031">
    <property type="term" value="P:protein transport"/>
    <property type="evidence" value="ECO:0007669"/>
    <property type="project" value="UniProtKB-UniRule"/>
</dbReference>
<dbReference type="GO" id="GO:0043335">
    <property type="term" value="P:protein unfolding"/>
    <property type="evidence" value="ECO:0007669"/>
    <property type="project" value="TreeGrafter"/>
</dbReference>
<dbReference type="FunFam" id="3.10.50.40:FF:000001">
    <property type="entry name" value="Trigger factor"/>
    <property type="match status" value="1"/>
</dbReference>
<dbReference type="FunFam" id="3.30.70.1050:FF:000001">
    <property type="entry name" value="Trigger factor"/>
    <property type="match status" value="1"/>
</dbReference>
<dbReference type="Gene3D" id="3.10.50.40">
    <property type="match status" value="1"/>
</dbReference>
<dbReference type="Gene3D" id="3.30.70.1050">
    <property type="entry name" value="Trigger factor ribosome-binding domain"/>
    <property type="match status" value="1"/>
</dbReference>
<dbReference type="Gene3D" id="1.10.3120.10">
    <property type="entry name" value="Trigger factor, C-terminal domain"/>
    <property type="match status" value="1"/>
</dbReference>
<dbReference type="HAMAP" id="MF_00303">
    <property type="entry name" value="Trigger_factor_Tig"/>
    <property type="match status" value="1"/>
</dbReference>
<dbReference type="InterPro" id="IPR046357">
    <property type="entry name" value="PPIase_dom_sf"/>
</dbReference>
<dbReference type="InterPro" id="IPR001179">
    <property type="entry name" value="PPIase_FKBP_dom"/>
</dbReference>
<dbReference type="InterPro" id="IPR005215">
    <property type="entry name" value="Trig_fac"/>
</dbReference>
<dbReference type="InterPro" id="IPR008880">
    <property type="entry name" value="Trigger_fac_C"/>
</dbReference>
<dbReference type="InterPro" id="IPR037041">
    <property type="entry name" value="Trigger_fac_C_sf"/>
</dbReference>
<dbReference type="InterPro" id="IPR008881">
    <property type="entry name" value="Trigger_fac_ribosome-bd_bac"/>
</dbReference>
<dbReference type="InterPro" id="IPR036611">
    <property type="entry name" value="Trigger_fac_ribosome-bd_sf"/>
</dbReference>
<dbReference type="InterPro" id="IPR027304">
    <property type="entry name" value="Trigger_fact/SurA_dom_sf"/>
</dbReference>
<dbReference type="NCBIfam" id="TIGR00115">
    <property type="entry name" value="tig"/>
    <property type="match status" value="1"/>
</dbReference>
<dbReference type="PANTHER" id="PTHR30560">
    <property type="entry name" value="TRIGGER FACTOR CHAPERONE AND PEPTIDYL-PROLYL CIS/TRANS ISOMERASE"/>
    <property type="match status" value="1"/>
</dbReference>
<dbReference type="PANTHER" id="PTHR30560:SF3">
    <property type="entry name" value="TRIGGER FACTOR-LIKE PROTEIN TIG, CHLOROPLASTIC"/>
    <property type="match status" value="1"/>
</dbReference>
<dbReference type="Pfam" id="PF00254">
    <property type="entry name" value="FKBP_C"/>
    <property type="match status" value="1"/>
</dbReference>
<dbReference type="Pfam" id="PF05698">
    <property type="entry name" value="Trigger_C"/>
    <property type="match status" value="1"/>
</dbReference>
<dbReference type="Pfam" id="PF05697">
    <property type="entry name" value="Trigger_N"/>
    <property type="match status" value="1"/>
</dbReference>
<dbReference type="PIRSF" id="PIRSF003095">
    <property type="entry name" value="Trigger_factor"/>
    <property type="match status" value="1"/>
</dbReference>
<dbReference type="SUPFAM" id="SSF54534">
    <property type="entry name" value="FKBP-like"/>
    <property type="match status" value="1"/>
</dbReference>
<dbReference type="SUPFAM" id="SSF109998">
    <property type="entry name" value="Triger factor/SurA peptide-binding domain-like"/>
    <property type="match status" value="1"/>
</dbReference>
<dbReference type="SUPFAM" id="SSF102735">
    <property type="entry name" value="Trigger factor ribosome-binding domain"/>
    <property type="match status" value="1"/>
</dbReference>
<dbReference type="PROSITE" id="PS50059">
    <property type="entry name" value="FKBP_PPIASE"/>
    <property type="match status" value="1"/>
</dbReference>
<accession>Q6LNV9</accession>
<organism>
    <name type="scientific">Photobacterium profundum (strain SS9)</name>
    <dbReference type="NCBI Taxonomy" id="298386"/>
    <lineage>
        <taxon>Bacteria</taxon>
        <taxon>Pseudomonadati</taxon>
        <taxon>Pseudomonadota</taxon>
        <taxon>Gammaproteobacteria</taxon>
        <taxon>Vibrionales</taxon>
        <taxon>Vibrionaceae</taxon>
        <taxon>Photobacterium</taxon>
    </lineage>
</organism>
<name>TIG_PHOPR</name>
<keyword id="KW-0131">Cell cycle</keyword>
<keyword id="KW-0132">Cell division</keyword>
<keyword id="KW-0143">Chaperone</keyword>
<keyword id="KW-0963">Cytoplasm</keyword>
<keyword id="KW-0413">Isomerase</keyword>
<keyword id="KW-1185">Reference proteome</keyword>
<keyword id="KW-0697">Rotamase</keyword>
<protein>
    <recommendedName>
        <fullName evidence="1">Trigger factor</fullName>
        <shortName evidence="1">TF</shortName>
        <ecNumber evidence="1">5.2.1.8</ecNumber>
    </recommendedName>
    <alternativeName>
        <fullName evidence="1">PPIase</fullName>
    </alternativeName>
</protein>
<sequence>MQVTVETTEGLERHLTITVPAANIENAVTAELKKIAKNRRFDGFRPGKAPMKMVARMFGGSVRQDILGEVMQRHFIEAIVKEKINPAGAPTFTPVDIAEGKDLVFKASFEVFPEIVLAGLDQIAVEKPAVEVKDEDVTNMLDTLRKQQATWSDVDAAAEADSRVTIDFIGSIDGEEFEGGKAEGFALAMGQNRMIPGFEDSIVGKKAGEEFTLEVTFPEEYHAENLKGKAASFAITLHKVEAQELPELTEEFIAKFGVLDGSIEGLKTEVRKNMERELKQAVKGRIKEQVLDGLVEQNDINVPAALIDQEINVLRQQAAQRFGGDAKNTPELPRELFEEQAKRRVVVGLLIGEVIKTEELKADEDRVKAIITEMASAYEDPTEVVSYYEQNEKMMSNMRNVALEEQAIDALLAKAQVTEKEVGFNDLMNQPAA</sequence>
<gene>
    <name evidence="1" type="primary">tig</name>
    <name type="ordered locus">PBPRA2638</name>
</gene>
<reference key="1">
    <citation type="journal article" date="2005" name="Science">
        <title>Life at depth: Photobacterium profundum genome sequence and expression analysis.</title>
        <authorList>
            <person name="Vezzi A."/>
            <person name="Campanaro S."/>
            <person name="D'Angelo M."/>
            <person name="Simonato F."/>
            <person name="Vitulo N."/>
            <person name="Lauro F.M."/>
            <person name="Cestaro A."/>
            <person name="Malacrida G."/>
            <person name="Simionati B."/>
            <person name="Cannata N."/>
            <person name="Romualdi C."/>
            <person name="Bartlett D.H."/>
            <person name="Valle G."/>
        </authorList>
    </citation>
    <scope>NUCLEOTIDE SEQUENCE [LARGE SCALE GENOMIC DNA]</scope>
    <source>
        <strain>ATCC BAA-1253 / SS9</strain>
    </source>
</reference>